<name>PPNP_PSEA8</name>
<evidence type="ECO:0000255" key="1">
    <source>
        <dbReference type="HAMAP-Rule" id="MF_01537"/>
    </source>
</evidence>
<keyword id="KW-0328">Glycosyltransferase</keyword>
<keyword id="KW-0808">Transferase</keyword>
<gene>
    <name evidence="1" type="primary">ppnP</name>
    <name type="ordered locus">PLES_37541</name>
</gene>
<reference key="1">
    <citation type="journal article" date="2009" name="Genome Res.">
        <title>Newly introduced genomic prophage islands are critical determinants of in vivo competitiveness in the Liverpool epidemic strain of Pseudomonas aeruginosa.</title>
        <authorList>
            <person name="Winstanley C."/>
            <person name="Langille M.G.I."/>
            <person name="Fothergill J.L."/>
            <person name="Kukavica-Ibrulj I."/>
            <person name="Paradis-Bleau C."/>
            <person name="Sanschagrin F."/>
            <person name="Thomson N.R."/>
            <person name="Winsor G.L."/>
            <person name="Quail M.A."/>
            <person name="Lennard N."/>
            <person name="Bignell A."/>
            <person name="Clarke L."/>
            <person name="Seeger K."/>
            <person name="Saunders D."/>
            <person name="Harris D."/>
            <person name="Parkhill J."/>
            <person name="Hancock R.E.W."/>
            <person name="Brinkman F.S.L."/>
            <person name="Levesque R.C."/>
        </authorList>
    </citation>
    <scope>NUCLEOTIDE SEQUENCE [LARGE SCALE GENOMIC DNA]</scope>
    <source>
        <strain>LESB58</strain>
    </source>
</reference>
<organism>
    <name type="scientific">Pseudomonas aeruginosa (strain LESB58)</name>
    <dbReference type="NCBI Taxonomy" id="557722"/>
    <lineage>
        <taxon>Bacteria</taxon>
        <taxon>Pseudomonadati</taxon>
        <taxon>Pseudomonadota</taxon>
        <taxon>Gammaproteobacteria</taxon>
        <taxon>Pseudomonadales</taxon>
        <taxon>Pseudomonadaceae</taxon>
        <taxon>Pseudomonas</taxon>
    </lineage>
</organism>
<dbReference type="EC" id="2.4.2.1" evidence="1"/>
<dbReference type="EC" id="2.4.2.2" evidence="1"/>
<dbReference type="EMBL" id="FM209186">
    <property type="protein sequence ID" value="CAW28481.1"/>
    <property type="molecule type" value="Genomic_DNA"/>
</dbReference>
<dbReference type="RefSeq" id="WP_003087375.1">
    <property type="nucleotide sequence ID" value="NC_011770.1"/>
</dbReference>
<dbReference type="SMR" id="B7UVE8"/>
<dbReference type="KEGG" id="pag:PLES_37541"/>
<dbReference type="HOGENOM" id="CLU_157874_0_0_6"/>
<dbReference type="GO" id="GO:0005829">
    <property type="term" value="C:cytosol"/>
    <property type="evidence" value="ECO:0007669"/>
    <property type="project" value="TreeGrafter"/>
</dbReference>
<dbReference type="GO" id="GO:0047975">
    <property type="term" value="F:guanosine phosphorylase activity"/>
    <property type="evidence" value="ECO:0007669"/>
    <property type="project" value="UniProtKB-EC"/>
</dbReference>
<dbReference type="GO" id="GO:0004731">
    <property type="term" value="F:purine-nucleoside phosphorylase activity"/>
    <property type="evidence" value="ECO:0007669"/>
    <property type="project" value="UniProtKB-UniRule"/>
</dbReference>
<dbReference type="GO" id="GO:0009032">
    <property type="term" value="F:thymidine phosphorylase activity"/>
    <property type="evidence" value="ECO:0007669"/>
    <property type="project" value="UniProtKB-EC"/>
</dbReference>
<dbReference type="GO" id="GO:0004850">
    <property type="term" value="F:uridine phosphorylase activity"/>
    <property type="evidence" value="ECO:0007669"/>
    <property type="project" value="UniProtKB-EC"/>
</dbReference>
<dbReference type="CDD" id="cd20296">
    <property type="entry name" value="cupin_PpnP-like"/>
    <property type="match status" value="1"/>
</dbReference>
<dbReference type="FunFam" id="2.60.120.10:FF:000016">
    <property type="entry name" value="Pyrimidine/purine nucleoside phosphorylase"/>
    <property type="match status" value="1"/>
</dbReference>
<dbReference type="Gene3D" id="2.60.120.10">
    <property type="entry name" value="Jelly Rolls"/>
    <property type="match status" value="1"/>
</dbReference>
<dbReference type="HAMAP" id="MF_01537">
    <property type="entry name" value="Nucleos_phosphorylase_PpnP"/>
    <property type="match status" value="1"/>
</dbReference>
<dbReference type="InterPro" id="IPR009664">
    <property type="entry name" value="Ppnp"/>
</dbReference>
<dbReference type="InterPro" id="IPR014710">
    <property type="entry name" value="RmlC-like_jellyroll"/>
</dbReference>
<dbReference type="InterPro" id="IPR011051">
    <property type="entry name" value="RmlC_Cupin_sf"/>
</dbReference>
<dbReference type="PANTHER" id="PTHR36540">
    <property type="entry name" value="PYRIMIDINE/PURINE NUCLEOSIDE PHOSPHORYLASE"/>
    <property type="match status" value="1"/>
</dbReference>
<dbReference type="PANTHER" id="PTHR36540:SF1">
    <property type="entry name" value="PYRIMIDINE_PURINE NUCLEOSIDE PHOSPHORYLASE"/>
    <property type="match status" value="1"/>
</dbReference>
<dbReference type="Pfam" id="PF06865">
    <property type="entry name" value="Ppnp"/>
    <property type="match status" value="1"/>
</dbReference>
<dbReference type="SUPFAM" id="SSF51182">
    <property type="entry name" value="RmlC-like cupins"/>
    <property type="match status" value="1"/>
</dbReference>
<comment type="function">
    <text evidence="1">Catalyzes the phosphorolysis of diverse nucleosides, yielding D-ribose 1-phosphate and the respective free bases. Can use uridine, adenosine, guanosine, cytidine, thymidine, inosine and xanthosine as substrates. Also catalyzes the reverse reactions.</text>
</comment>
<comment type="catalytic activity">
    <reaction evidence="1">
        <text>a purine D-ribonucleoside + phosphate = a purine nucleobase + alpha-D-ribose 1-phosphate</text>
        <dbReference type="Rhea" id="RHEA:19805"/>
        <dbReference type="ChEBI" id="CHEBI:26386"/>
        <dbReference type="ChEBI" id="CHEBI:43474"/>
        <dbReference type="ChEBI" id="CHEBI:57720"/>
        <dbReference type="ChEBI" id="CHEBI:142355"/>
        <dbReference type="EC" id="2.4.2.1"/>
    </reaction>
</comment>
<comment type="catalytic activity">
    <reaction evidence="1">
        <text>adenosine + phosphate = alpha-D-ribose 1-phosphate + adenine</text>
        <dbReference type="Rhea" id="RHEA:27642"/>
        <dbReference type="ChEBI" id="CHEBI:16335"/>
        <dbReference type="ChEBI" id="CHEBI:16708"/>
        <dbReference type="ChEBI" id="CHEBI:43474"/>
        <dbReference type="ChEBI" id="CHEBI:57720"/>
        <dbReference type="EC" id="2.4.2.1"/>
    </reaction>
</comment>
<comment type="catalytic activity">
    <reaction evidence="1">
        <text>cytidine + phosphate = cytosine + alpha-D-ribose 1-phosphate</text>
        <dbReference type="Rhea" id="RHEA:52540"/>
        <dbReference type="ChEBI" id="CHEBI:16040"/>
        <dbReference type="ChEBI" id="CHEBI:17562"/>
        <dbReference type="ChEBI" id="CHEBI:43474"/>
        <dbReference type="ChEBI" id="CHEBI:57720"/>
        <dbReference type="EC" id="2.4.2.2"/>
    </reaction>
</comment>
<comment type="catalytic activity">
    <reaction evidence="1">
        <text>guanosine + phosphate = alpha-D-ribose 1-phosphate + guanine</text>
        <dbReference type="Rhea" id="RHEA:13233"/>
        <dbReference type="ChEBI" id="CHEBI:16235"/>
        <dbReference type="ChEBI" id="CHEBI:16750"/>
        <dbReference type="ChEBI" id="CHEBI:43474"/>
        <dbReference type="ChEBI" id="CHEBI:57720"/>
        <dbReference type="EC" id="2.4.2.1"/>
    </reaction>
</comment>
<comment type="catalytic activity">
    <reaction evidence="1">
        <text>inosine + phosphate = alpha-D-ribose 1-phosphate + hypoxanthine</text>
        <dbReference type="Rhea" id="RHEA:27646"/>
        <dbReference type="ChEBI" id="CHEBI:17368"/>
        <dbReference type="ChEBI" id="CHEBI:17596"/>
        <dbReference type="ChEBI" id="CHEBI:43474"/>
        <dbReference type="ChEBI" id="CHEBI:57720"/>
        <dbReference type="EC" id="2.4.2.1"/>
    </reaction>
</comment>
<comment type="catalytic activity">
    <reaction evidence="1">
        <text>thymidine + phosphate = 2-deoxy-alpha-D-ribose 1-phosphate + thymine</text>
        <dbReference type="Rhea" id="RHEA:16037"/>
        <dbReference type="ChEBI" id="CHEBI:17748"/>
        <dbReference type="ChEBI" id="CHEBI:17821"/>
        <dbReference type="ChEBI" id="CHEBI:43474"/>
        <dbReference type="ChEBI" id="CHEBI:57259"/>
        <dbReference type="EC" id="2.4.2.2"/>
    </reaction>
</comment>
<comment type="catalytic activity">
    <reaction evidence="1">
        <text>uridine + phosphate = alpha-D-ribose 1-phosphate + uracil</text>
        <dbReference type="Rhea" id="RHEA:24388"/>
        <dbReference type="ChEBI" id="CHEBI:16704"/>
        <dbReference type="ChEBI" id="CHEBI:17568"/>
        <dbReference type="ChEBI" id="CHEBI:43474"/>
        <dbReference type="ChEBI" id="CHEBI:57720"/>
        <dbReference type="EC" id="2.4.2.2"/>
    </reaction>
</comment>
<comment type="catalytic activity">
    <reaction evidence="1">
        <text>xanthosine + phosphate = alpha-D-ribose 1-phosphate + xanthine</text>
        <dbReference type="Rhea" id="RHEA:27638"/>
        <dbReference type="ChEBI" id="CHEBI:17712"/>
        <dbReference type="ChEBI" id="CHEBI:18107"/>
        <dbReference type="ChEBI" id="CHEBI:43474"/>
        <dbReference type="ChEBI" id="CHEBI:57720"/>
        <dbReference type="EC" id="2.4.2.1"/>
    </reaction>
</comment>
<comment type="similarity">
    <text evidence="1">Belongs to the nucleoside phosphorylase PpnP family.</text>
</comment>
<accession>B7UVE8</accession>
<proteinExistence type="inferred from homology"/>
<sequence length="93" mass="10156">MFKVNEYFDGTVKSIAFDMTAGPATIGVMAAGEYEFGTSQLEIMHVVAGALTVKLPGSDEWQEYASGSQFTVPANSKFQLKVAQDTAYLCEYR</sequence>
<feature type="chain" id="PRO_1000198670" description="Pyrimidine/purine nucleoside phosphorylase">
    <location>
        <begin position="1"/>
        <end position="93"/>
    </location>
</feature>
<protein>
    <recommendedName>
        <fullName evidence="1">Pyrimidine/purine nucleoside phosphorylase</fullName>
        <ecNumber evidence="1">2.4.2.1</ecNumber>
        <ecNumber evidence="1">2.4.2.2</ecNumber>
    </recommendedName>
    <alternativeName>
        <fullName evidence="1">Adenosine phosphorylase</fullName>
    </alternativeName>
    <alternativeName>
        <fullName evidence="1">Cytidine phosphorylase</fullName>
    </alternativeName>
    <alternativeName>
        <fullName evidence="1">Guanosine phosphorylase</fullName>
    </alternativeName>
    <alternativeName>
        <fullName evidence="1">Inosine phosphorylase</fullName>
    </alternativeName>
    <alternativeName>
        <fullName evidence="1">Thymidine phosphorylase</fullName>
    </alternativeName>
    <alternativeName>
        <fullName evidence="1">Uridine phosphorylase</fullName>
    </alternativeName>
    <alternativeName>
        <fullName evidence="1">Xanthosine phosphorylase</fullName>
    </alternativeName>
</protein>